<accession>P94632</accession>
<sequence>MNPIQLDTLLSIIDEGSFEGASLALSISPSAVSQRVKALEHHVGRVLVSRTQPAKATEAGEVLVQAARKMVLLQAETKAQLSGRLAEIPLTIAINADSLSTWFPPVFNEVASWGGATLTLRLEDEAHTLSLLRRGDVLGAVTREANPVAGCEVVELGTMRHLAIATPSLRDAYMVDGKLDWAAMPVLRFGPKDVLQDRDLDGRVDGPVGRRRVSIVPSAEGFGEAIRRGLGWGLLPETQAAPMLKAGEVILLDEIPIDTPMYWQRWRLESRSLARLTDAVVDAAIEGLRP</sequence>
<feature type="chain" id="PRO_0000105668" description="Lysine export transcriptional regulatory protein LysG">
    <location>
        <begin position="1"/>
        <end position="290"/>
    </location>
</feature>
<feature type="domain" description="HTH lysR-type" evidence="1">
    <location>
        <begin position="1"/>
        <end position="57"/>
    </location>
</feature>
<feature type="DNA-binding region" description="H-T-H motif" evidence="1">
    <location>
        <begin position="18"/>
        <end position="37"/>
    </location>
</feature>
<feature type="helix" evidence="7">
    <location>
        <begin position="3"/>
        <end position="15"/>
    </location>
</feature>
<feature type="helix" evidence="7">
    <location>
        <begin position="18"/>
        <end position="25"/>
    </location>
</feature>
<feature type="helix" evidence="7">
    <location>
        <begin position="29"/>
        <end position="43"/>
    </location>
</feature>
<feature type="strand" evidence="7">
    <location>
        <begin position="50"/>
        <end position="53"/>
    </location>
</feature>
<feature type="helix" evidence="7">
    <location>
        <begin position="58"/>
        <end position="82"/>
    </location>
</feature>
<feature type="strand" evidence="7">
    <location>
        <begin position="89"/>
        <end position="94"/>
    </location>
</feature>
<feature type="helix" evidence="7">
    <location>
        <begin position="96"/>
        <end position="99"/>
    </location>
</feature>
<feature type="turn" evidence="7">
    <location>
        <begin position="100"/>
        <end position="102"/>
    </location>
</feature>
<feature type="helix" evidence="7">
    <location>
        <begin position="105"/>
        <end position="112"/>
    </location>
</feature>
<feature type="strand" evidence="7">
    <location>
        <begin position="113"/>
        <end position="115"/>
    </location>
</feature>
<feature type="strand" evidence="7">
    <location>
        <begin position="117"/>
        <end position="122"/>
    </location>
</feature>
<feature type="helix" evidence="7">
    <location>
        <begin position="125"/>
        <end position="133"/>
    </location>
</feature>
<feature type="strand" evidence="7">
    <location>
        <begin position="138"/>
        <end position="143"/>
    </location>
</feature>
<feature type="strand" evidence="7">
    <location>
        <begin position="151"/>
        <end position="165"/>
    </location>
</feature>
<feature type="helix" evidence="7">
    <location>
        <begin position="167"/>
        <end position="172"/>
    </location>
</feature>
<feature type="turn" evidence="7">
    <location>
        <begin position="181"/>
        <end position="183"/>
    </location>
</feature>
<feature type="strand" evidence="7">
    <location>
        <begin position="186"/>
        <end position="189"/>
    </location>
</feature>
<feature type="helix" evidence="8">
    <location>
        <begin position="194"/>
        <end position="197"/>
    </location>
</feature>
<feature type="helix" evidence="7">
    <location>
        <begin position="198"/>
        <end position="200"/>
    </location>
</feature>
<feature type="turn" evidence="7">
    <location>
        <begin position="201"/>
        <end position="203"/>
    </location>
</feature>
<feature type="strand" evidence="7">
    <location>
        <begin position="213"/>
        <end position="215"/>
    </location>
</feature>
<feature type="helix" evidence="7">
    <location>
        <begin position="219"/>
        <end position="227"/>
    </location>
</feature>
<feature type="strand" evidence="7">
    <location>
        <begin position="232"/>
        <end position="236"/>
    </location>
</feature>
<feature type="helix" evidence="7">
    <location>
        <begin position="237"/>
        <end position="245"/>
    </location>
</feature>
<feature type="strand" evidence="7">
    <location>
        <begin position="248"/>
        <end position="252"/>
    </location>
</feature>
<feature type="strand" evidence="7">
    <location>
        <begin position="257"/>
        <end position="266"/>
    </location>
</feature>
<feature type="helix" evidence="7">
    <location>
        <begin position="271"/>
        <end position="287"/>
    </location>
</feature>
<reference key="1">
    <citation type="journal article" date="1996" name="Mol. Microbiol.">
        <title>A new type of transporter with a new type of cellular function: L-lysine export from Corynebacterium glutamicum.</title>
        <authorList>
            <person name="Vrljic M.M."/>
            <person name="Sahm H."/>
            <person name="Eggeling L."/>
        </authorList>
    </citation>
    <scope>NUCLEOTIDE SEQUENCE [GENOMIC DNA]</scope>
    <source>
        <strain>R127</strain>
    </source>
</reference>
<reference key="2">
    <citation type="journal article" date="2003" name="Appl. Microbiol. Biotechnol.">
        <title>The Corynebacterium glutamicum genome: features and impacts on biotechnological processes.</title>
        <authorList>
            <person name="Ikeda M."/>
            <person name="Nakagawa S."/>
        </authorList>
    </citation>
    <scope>NUCLEOTIDE SEQUENCE [LARGE SCALE GENOMIC DNA]</scope>
    <source>
        <strain>ATCC 13032 / DSM 20300 / JCM 1318 / BCRC 11384 / CCUG 27702 / LMG 3730 / NBRC 12168 / NCIMB 10025 / NRRL B-2784 / 534</strain>
    </source>
</reference>
<reference key="3">
    <citation type="journal article" date="2003" name="J. Biotechnol.">
        <title>The complete Corynebacterium glutamicum ATCC 13032 genome sequence and its impact on the production of L-aspartate-derived amino acids and vitamins.</title>
        <authorList>
            <person name="Kalinowski J."/>
            <person name="Bathe B."/>
            <person name="Bartels D."/>
            <person name="Bischoff N."/>
            <person name="Bott M."/>
            <person name="Burkovski A."/>
            <person name="Dusch N."/>
            <person name="Eggeling L."/>
            <person name="Eikmanns B.J."/>
            <person name="Gaigalat L."/>
            <person name="Goesmann A."/>
            <person name="Hartmann M."/>
            <person name="Huthmacher K."/>
            <person name="Kraemer R."/>
            <person name="Linke B."/>
            <person name="McHardy A.C."/>
            <person name="Meyer F."/>
            <person name="Moeckel B."/>
            <person name="Pfefferle W."/>
            <person name="Puehler A."/>
            <person name="Rey D.A."/>
            <person name="Rueckert C."/>
            <person name="Rupp O."/>
            <person name="Sahm H."/>
            <person name="Wendisch V.F."/>
            <person name="Wiegraebe I."/>
            <person name="Tauch A."/>
        </authorList>
    </citation>
    <scope>NUCLEOTIDE SEQUENCE [LARGE SCALE GENOMIC DNA]</scope>
    <source>
        <strain>ATCC 13032 / DSM 20300 / JCM 1318 / BCRC 11384 / CCUG 27702 / LMG 3730 / NBRC 12168 / NCIMB 10025 / NRRL B-2784 / 534</strain>
    </source>
</reference>
<reference key="4">
    <citation type="journal article" date="2001" name="Microbiology">
        <title>Expression control and specificity of the basic amino acid exporter LysE of Corynebacterium glutamicum.</title>
        <authorList>
            <person name="Bellmann A."/>
            <person name="Vrljic M."/>
            <person name="Patek M."/>
            <person name="Sahm H."/>
            <person name="Kraemer R."/>
            <person name="Eggeling L."/>
        </authorList>
    </citation>
    <scope>FUNCTION AS A REGULATOR</scope>
    <source>
        <strain>ATCC 13032 / DSM 20300 / JCM 1318 / BCRC 11384 / CCUG 27702 / LMG 3730 / NBRC 12168 / NCIMB 10025 / NRRL B-2784 / 534</strain>
    </source>
</reference>
<reference key="5">
    <citation type="journal article" date="2016" name="Appl. Microbiol. Biotechnol.">
        <title>Roles of export genes cgmA and lysE for the production of L-arginine and L-citrulline by Corynebacterium glutamicum.</title>
        <authorList>
            <person name="Lubitz D."/>
            <person name="Jorge J.M."/>
            <person name="Perez-Garcia F."/>
            <person name="Taniguchi H."/>
            <person name="Wendisch V.F."/>
        </authorList>
    </citation>
    <scope>FUNCTION</scope>
    <scope>DISRUPTION PHENOTYPE</scope>
    <source>
        <strain>ATCC 13032 / DSM 20300 / JCM 1318 / BCRC 11384 / CCUG 27702 / LMG 3730 / NBRC 12168 / NCIMB 10025 / NRRL B-2784 / 534</strain>
    </source>
</reference>
<organism>
    <name type="scientific">Corynebacterium glutamicum (strain ATCC 13032 / DSM 20300 / JCM 1318 / BCRC 11384 / CCUG 27702 / LMG 3730 / NBRC 12168 / NCIMB 10025 / NRRL B-2784 / 534)</name>
    <dbReference type="NCBI Taxonomy" id="196627"/>
    <lineage>
        <taxon>Bacteria</taxon>
        <taxon>Bacillati</taxon>
        <taxon>Actinomycetota</taxon>
        <taxon>Actinomycetes</taxon>
        <taxon>Mycobacteriales</taxon>
        <taxon>Corynebacteriaceae</taxon>
        <taxon>Corynebacterium</taxon>
    </lineage>
</organism>
<keyword id="KW-0002">3D-structure</keyword>
<keyword id="KW-0010">Activator</keyword>
<keyword id="KW-0238">DNA-binding</keyword>
<keyword id="KW-1185">Reference proteome</keyword>
<keyword id="KW-0804">Transcription</keyword>
<keyword id="KW-0805">Transcription regulation</keyword>
<name>LYSG_CORGL</name>
<evidence type="ECO:0000255" key="1">
    <source>
        <dbReference type="PROSITE-ProRule" id="PRU00253"/>
    </source>
</evidence>
<evidence type="ECO:0000269" key="2">
    <source>
    </source>
</evidence>
<evidence type="ECO:0000269" key="3">
    <source>
    </source>
</evidence>
<evidence type="ECO:0000303" key="4">
    <source>
    </source>
</evidence>
<evidence type="ECO:0000305" key="5"/>
<evidence type="ECO:0000305" key="6">
    <source>
    </source>
</evidence>
<evidence type="ECO:0007829" key="7">
    <source>
        <dbReference type="PDB" id="6XTU"/>
    </source>
</evidence>
<evidence type="ECO:0007829" key="8">
    <source>
        <dbReference type="PDB" id="6XTV"/>
    </source>
</evidence>
<comment type="function">
    <text evidence="2 6">Positively regulates the expression of the exporter LysE. Induction requires the presence of a coinducer, which is either intracellular L-lysine, L-arginine or L-citrulline. L-histidine also acts as a coinducer of lysE expression, but this amino acid is not exported by LysE (PubMed:11429454, PubMed:27350619). The lysEG system prevents bacteriostasis due to elevated L-lysine or L-arginine concentrations that arise during growth in the presence of peptides or in mutants possessing a deregulated biosynthesis pathway (PubMed:11429454).</text>
</comment>
<comment type="disruption phenotype">
    <text evidence="3">Deletion of lysEG decreases the extracellular accumulation of L-lysine, L-arginine and L-citrulline.</text>
</comment>
<comment type="similarity">
    <text evidence="5">Belongs to the LysR transcriptional regulatory family.</text>
</comment>
<protein>
    <recommendedName>
        <fullName evidence="5">Lysine export transcriptional regulatory protein LysG</fullName>
    </recommendedName>
</protein>
<dbReference type="EMBL" id="X96471">
    <property type="protein sequence ID" value="CAA65323.1"/>
    <property type="molecule type" value="Genomic_DNA"/>
</dbReference>
<dbReference type="EMBL" id="BA000036">
    <property type="protein sequence ID" value="BAB98656.1"/>
    <property type="molecule type" value="Genomic_DNA"/>
</dbReference>
<dbReference type="EMBL" id="BX927151">
    <property type="protein sequence ID" value="CAF19966.1"/>
    <property type="molecule type" value="Genomic_DNA"/>
</dbReference>
<dbReference type="RefSeq" id="NP_600486.1">
    <property type="nucleotide sequence ID" value="NC_003450.3"/>
</dbReference>
<dbReference type="RefSeq" id="WP_011014240.1">
    <property type="nucleotide sequence ID" value="NC_006958.1"/>
</dbReference>
<dbReference type="PDB" id="6XTU">
    <property type="method" value="X-ray"/>
    <property type="resolution" value="2.52 A"/>
    <property type="chains" value="A/B=1-290"/>
</dbReference>
<dbReference type="PDB" id="6XTV">
    <property type="method" value="X-ray"/>
    <property type="resolution" value="3.30 A"/>
    <property type="chains" value="A/B=1-290"/>
</dbReference>
<dbReference type="PDBsum" id="6XTU"/>
<dbReference type="PDBsum" id="6XTV"/>
<dbReference type="SMR" id="P94632"/>
<dbReference type="STRING" id="196627.cg1425"/>
<dbReference type="KEGG" id="cgb:cg1425"/>
<dbReference type="KEGG" id="cgl:Cgl1263"/>
<dbReference type="PATRIC" id="fig|196627.13.peg.1240"/>
<dbReference type="eggNOG" id="COG0583">
    <property type="taxonomic scope" value="Bacteria"/>
</dbReference>
<dbReference type="HOGENOM" id="CLU_063829_0_1_11"/>
<dbReference type="OrthoDB" id="3252676at2"/>
<dbReference type="BioCyc" id="CORYNE:G18NG-10836-MONOMER"/>
<dbReference type="Proteomes" id="UP000000582">
    <property type="component" value="Chromosome"/>
</dbReference>
<dbReference type="Proteomes" id="UP000001009">
    <property type="component" value="Chromosome"/>
</dbReference>
<dbReference type="GO" id="GO:0003677">
    <property type="term" value="F:DNA binding"/>
    <property type="evidence" value="ECO:0007669"/>
    <property type="project" value="UniProtKB-KW"/>
</dbReference>
<dbReference type="GO" id="GO:0003700">
    <property type="term" value="F:DNA-binding transcription factor activity"/>
    <property type="evidence" value="ECO:0007669"/>
    <property type="project" value="InterPro"/>
</dbReference>
<dbReference type="Gene3D" id="3.40.190.290">
    <property type="match status" value="1"/>
</dbReference>
<dbReference type="Gene3D" id="1.10.10.10">
    <property type="entry name" value="Winged helix-like DNA-binding domain superfamily/Winged helix DNA-binding domain"/>
    <property type="match status" value="1"/>
</dbReference>
<dbReference type="InterPro" id="IPR017685">
    <property type="entry name" value="ArgP"/>
</dbReference>
<dbReference type="InterPro" id="IPR050176">
    <property type="entry name" value="LTTR"/>
</dbReference>
<dbReference type="InterPro" id="IPR005119">
    <property type="entry name" value="LysR_subst-bd"/>
</dbReference>
<dbReference type="InterPro" id="IPR000847">
    <property type="entry name" value="Tscrpt_reg_HTH_LysR"/>
</dbReference>
<dbReference type="InterPro" id="IPR036388">
    <property type="entry name" value="WH-like_DNA-bd_sf"/>
</dbReference>
<dbReference type="InterPro" id="IPR036390">
    <property type="entry name" value="WH_DNA-bd_sf"/>
</dbReference>
<dbReference type="NCBIfam" id="TIGR03298">
    <property type="entry name" value="argP"/>
    <property type="match status" value="1"/>
</dbReference>
<dbReference type="NCBIfam" id="NF002964">
    <property type="entry name" value="PRK03635.1"/>
    <property type="match status" value="1"/>
</dbReference>
<dbReference type="PANTHER" id="PTHR30579:SF2">
    <property type="entry name" value="HTH-TYPE TRANSCRIPTIONAL REGULATOR ARGP"/>
    <property type="match status" value="1"/>
</dbReference>
<dbReference type="PANTHER" id="PTHR30579">
    <property type="entry name" value="TRANSCRIPTIONAL REGULATOR"/>
    <property type="match status" value="1"/>
</dbReference>
<dbReference type="Pfam" id="PF00126">
    <property type="entry name" value="HTH_1"/>
    <property type="match status" value="1"/>
</dbReference>
<dbReference type="Pfam" id="PF03466">
    <property type="entry name" value="LysR_substrate"/>
    <property type="match status" value="1"/>
</dbReference>
<dbReference type="SUPFAM" id="SSF53850">
    <property type="entry name" value="Periplasmic binding protein-like II"/>
    <property type="match status" value="1"/>
</dbReference>
<dbReference type="SUPFAM" id="SSF46785">
    <property type="entry name" value="Winged helix' DNA-binding domain"/>
    <property type="match status" value="1"/>
</dbReference>
<dbReference type="PROSITE" id="PS50931">
    <property type="entry name" value="HTH_LYSR"/>
    <property type="match status" value="1"/>
</dbReference>
<gene>
    <name evidence="4" type="primary">lysG</name>
    <name type="ordered locus">Cgl1263</name>
    <name type="ordered locus">cg1425</name>
</gene>
<proteinExistence type="evidence at protein level"/>